<organism>
    <name type="scientific">Homo sapiens</name>
    <name type="common">Human</name>
    <dbReference type="NCBI Taxonomy" id="9606"/>
    <lineage>
        <taxon>Eukaryota</taxon>
        <taxon>Metazoa</taxon>
        <taxon>Chordata</taxon>
        <taxon>Craniata</taxon>
        <taxon>Vertebrata</taxon>
        <taxon>Euteleostomi</taxon>
        <taxon>Mammalia</taxon>
        <taxon>Eutheria</taxon>
        <taxon>Euarchontoglires</taxon>
        <taxon>Primates</taxon>
        <taxon>Haplorrhini</taxon>
        <taxon>Catarrhini</taxon>
        <taxon>Hominidae</taxon>
        <taxon>Homo</taxon>
    </lineage>
</organism>
<evidence type="ECO:0000269" key="1">
    <source>
    </source>
</evidence>
<evidence type="ECO:0000269" key="2">
    <source>
    </source>
</evidence>
<evidence type="ECO:0000305" key="3"/>
<dbReference type="EMBL" id="BC000549">
    <property type="protein sequence ID" value="AAH00549.1"/>
    <property type="molecule type" value="mRNA"/>
</dbReference>
<dbReference type="EMBL" id="BC037563">
    <property type="protein sequence ID" value="AAH37563.1"/>
    <property type="molecule type" value="mRNA"/>
</dbReference>
<dbReference type="EMBL" id="AY358632">
    <property type="protein sequence ID" value="AAQ88995.1"/>
    <property type="status" value="ALT_INIT"/>
    <property type="molecule type" value="mRNA"/>
</dbReference>
<dbReference type="CCDS" id="CCDS10610.1"/>
<dbReference type="RefSeq" id="NP_705831.1">
    <property type="nucleotide sequence ID" value="NM_153603.4"/>
</dbReference>
<dbReference type="BioGRID" id="124896">
    <property type="interactions" value="84"/>
</dbReference>
<dbReference type="ComplexPortal" id="CPX-6199">
    <property type="entry name" value="COG tethering complex"/>
</dbReference>
<dbReference type="CORUM" id="P83436"/>
<dbReference type="FunCoup" id="P83436">
    <property type="interactions" value="2050"/>
</dbReference>
<dbReference type="IntAct" id="P83436">
    <property type="interactions" value="53"/>
</dbReference>
<dbReference type="MINT" id="P83436"/>
<dbReference type="STRING" id="9606.ENSP00000305442"/>
<dbReference type="ChEMBL" id="CHEMBL4105843"/>
<dbReference type="GlyCosmos" id="P83436">
    <property type="glycosylation" value="1 site, 1 glycan"/>
</dbReference>
<dbReference type="GlyGen" id="P83436">
    <property type="glycosylation" value="1 site, 1 O-linked glycan (1 site)"/>
</dbReference>
<dbReference type="iPTMnet" id="P83436"/>
<dbReference type="PhosphoSitePlus" id="P83436"/>
<dbReference type="BioMuta" id="COG7"/>
<dbReference type="DMDM" id="22653684"/>
<dbReference type="jPOST" id="P83436"/>
<dbReference type="MassIVE" id="P83436"/>
<dbReference type="PaxDb" id="9606-ENSP00000305442"/>
<dbReference type="PeptideAtlas" id="P83436"/>
<dbReference type="ProteomicsDB" id="57736"/>
<dbReference type="Pumba" id="P83436"/>
<dbReference type="Antibodypedia" id="25940">
    <property type="antibodies" value="207 antibodies from 31 providers"/>
</dbReference>
<dbReference type="DNASU" id="91949"/>
<dbReference type="Ensembl" id="ENST00000307149.10">
    <property type="protein sequence ID" value="ENSP00000305442.5"/>
    <property type="gene ID" value="ENSG00000168434.13"/>
</dbReference>
<dbReference type="GeneID" id="91949"/>
<dbReference type="KEGG" id="hsa:91949"/>
<dbReference type="MANE-Select" id="ENST00000307149.10">
    <property type="protein sequence ID" value="ENSP00000305442.5"/>
    <property type="RefSeq nucleotide sequence ID" value="NM_153603.4"/>
    <property type="RefSeq protein sequence ID" value="NP_705831.1"/>
</dbReference>
<dbReference type="UCSC" id="uc002dlo.4">
    <property type="organism name" value="human"/>
</dbReference>
<dbReference type="AGR" id="HGNC:18622"/>
<dbReference type="CTD" id="91949"/>
<dbReference type="DisGeNET" id="91949"/>
<dbReference type="GeneCards" id="COG7"/>
<dbReference type="GeneReviews" id="COG7"/>
<dbReference type="HGNC" id="HGNC:18622">
    <property type="gene designation" value="COG7"/>
</dbReference>
<dbReference type="HPA" id="ENSG00000168434">
    <property type="expression patterns" value="Low tissue specificity"/>
</dbReference>
<dbReference type="MalaCards" id="COG7"/>
<dbReference type="MIM" id="606978">
    <property type="type" value="gene"/>
</dbReference>
<dbReference type="MIM" id="608779">
    <property type="type" value="phenotype"/>
</dbReference>
<dbReference type="neXtProt" id="NX_P83436"/>
<dbReference type="OpenTargets" id="ENSG00000168434"/>
<dbReference type="Orphanet" id="79333">
    <property type="disease" value="COG7-CDG"/>
</dbReference>
<dbReference type="PharmGKB" id="PA38605"/>
<dbReference type="VEuPathDB" id="HostDB:ENSG00000168434"/>
<dbReference type="eggNOG" id="KOG4182">
    <property type="taxonomic scope" value="Eukaryota"/>
</dbReference>
<dbReference type="GeneTree" id="ENSGT00390000001260"/>
<dbReference type="HOGENOM" id="CLU_006044_2_0_1"/>
<dbReference type="InParanoid" id="P83436"/>
<dbReference type="OMA" id="LKYYHNC"/>
<dbReference type="OrthoDB" id="245173at2759"/>
<dbReference type="PAN-GO" id="P83436">
    <property type="GO annotations" value="3 GO annotations based on evolutionary models"/>
</dbReference>
<dbReference type="PhylomeDB" id="P83436"/>
<dbReference type="TreeFam" id="TF324498"/>
<dbReference type="PathwayCommons" id="P83436"/>
<dbReference type="Reactome" id="R-HSA-6807878">
    <property type="pathway name" value="COPI-mediated anterograde transport"/>
</dbReference>
<dbReference type="Reactome" id="R-HSA-6811438">
    <property type="pathway name" value="Intra-Golgi traffic"/>
</dbReference>
<dbReference type="Reactome" id="R-HSA-6811440">
    <property type="pathway name" value="Retrograde transport at the Trans-Golgi-Network"/>
</dbReference>
<dbReference type="SignaLink" id="P83436"/>
<dbReference type="BioGRID-ORCS" id="91949">
    <property type="hits" value="192 hits in 1159 CRISPR screens"/>
</dbReference>
<dbReference type="ChiTaRS" id="COG7">
    <property type="organism name" value="human"/>
</dbReference>
<dbReference type="GeneWiki" id="COG7"/>
<dbReference type="GenomeRNAi" id="91949"/>
<dbReference type="Pharos" id="P83436">
    <property type="development level" value="Tbio"/>
</dbReference>
<dbReference type="PRO" id="PR:P83436"/>
<dbReference type="Proteomes" id="UP000005640">
    <property type="component" value="Chromosome 16"/>
</dbReference>
<dbReference type="RNAct" id="P83436">
    <property type="molecule type" value="protein"/>
</dbReference>
<dbReference type="Bgee" id="ENSG00000168434">
    <property type="expression patterns" value="Expressed in right uterine tube and 191 other cell types or tissues"/>
</dbReference>
<dbReference type="ExpressionAtlas" id="P83436">
    <property type="expression patterns" value="baseline and differential"/>
</dbReference>
<dbReference type="GO" id="GO:0005794">
    <property type="term" value="C:Golgi apparatus"/>
    <property type="evidence" value="ECO:0000314"/>
    <property type="project" value="UniProtKB"/>
</dbReference>
<dbReference type="GO" id="GO:0000139">
    <property type="term" value="C:Golgi membrane"/>
    <property type="evidence" value="ECO:0000304"/>
    <property type="project" value="Reactome"/>
</dbReference>
<dbReference type="GO" id="GO:0017119">
    <property type="term" value="C:Golgi transport complex"/>
    <property type="evidence" value="ECO:0000314"/>
    <property type="project" value="UniProtKB"/>
</dbReference>
<dbReference type="GO" id="GO:0043231">
    <property type="term" value="C:intracellular membrane-bounded organelle"/>
    <property type="evidence" value="ECO:0000314"/>
    <property type="project" value="HPA"/>
</dbReference>
<dbReference type="GO" id="GO:0005730">
    <property type="term" value="C:nucleolus"/>
    <property type="evidence" value="ECO:0000314"/>
    <property type="project" value="HPA"/>
</dbReference>
<dbReference type="GO" id="GO:0032588">
    <property type="term" value="C:trans-Golgi network membrane"/>
    <property type="evidence" value="ECO:0000304"/>
    <property type="project" value="Reactome"/>
</dbReference>
<dbReference type="GO" id="GO:0070085">
    <property type="term" value="P:glycosylation"/>
    <property type="evidence" value="ECO:0000315"/>
    <property type="project" value="ComplexPortal"/>
</dbReference>
<dbReference type="GO" id="GO:0007030">
    <property type="term" value="P:Golgi organization"/>
    <property type="evidence" value="ECO:0000315"/>
    <property type="project" value="ComplexPortal"/>
</dbReference>
<dbReference type="GO" id="GO:0006886">
    <property type="term" value="P:intracellular protein transport"/>
    <property type="evidence" value="ECO:0000315"/>
    <property type="project" value="UniProtKB"/>
</dbReference>
<dbReference type="GO" id="GO:0006486">
    <property type="term" value="P:protein glycosylation"/>
    <property type="evidence" value="ECO:0000315"/>
    <property type="project" value="UniProtKB"/>
</dbReference>
<dbReference type="GO" id="GO:0034067">
    <property type="term" value="P:protein localization to Golgi apparatus"/>
    <property type="evidence" value="ECO:0000315"/>
    <property type="project" value="UniProtKB"/>
</dbReference>
<dbReference type="GO" id="GO:0033365">
    <property type="term" value="P:protein localization to organelle"/>
    <property type="evidence" value="ECO:0000315"/>
    <property type="project" value="UniProtKB"/>
</dbReference>
<dbReference type="GO" id="GO:0050821">
    <property type="term" value="P:protein stabilization"/>
    <property type="evidence" value="ECO:0000315"/>
    <property type="project" value="UniProtKB"/>
</dbReference>
<dbReference type="GO" id="GO:0000301">
    <property type="term" value="P:retrograde transport, vesicle recycling within Golgi"/>
    <property type="evidence" value="ECO:0000315"/>
    <property type="project" value="ComplexPortal"/>
</dbReference>
<dbReference type="GO" id="GO:0006890">
    <property type="term" value="P:retrograde vesicle-mediated transport, Golgi to endoplasmic reticulum"/>
    <property type="evidence" value="ECO:0000315"/>
    <property type="project" value="UniProtKB"/>
</dbReference>
<dbReference type="InterPro" id="IPR019335">
    <property type="entry name" value="COG7"/>
</dbReference>
<dbReference type="PANTHER" id="PTHR21443">
    <property type="entry name" value="CONSERVED OLIGOMERIC GOLGI COMPLEX COMPONENT 7"/>
    <property type="match status" value="1"/>
</dbReference>
<dbReference type="PANTHER" id="PTHR21443:SF0">
    <property type="entry name" value="CONSERVED OLIGOMERIC GOLGI COMPLEX SUBUNIT 7"/>
    <property type="match status" value="1"/>
</dbReference>
<dbReference type="Pfam" id="PF10191">
    <property type="entry name" value="COG7"/>
    <property type="match status" value="1"/>
</dbReference>
<name>COG7_HUMAN</name>
<proteinExistence type="evidence at protein level"/>
<sequence length="770" mass="86344">MDFSKFLADDFDVKEWINAAFRAGSKEAASGKADGHAATLVMKLQLFIQEVNHAVEETSHQALQNMPKVLRDVEALKQEASFLKEQMILVKEDIKKFEQDTSQSMQVLVEIDQVKSRMQLAAESLQEADKWSTLSADIEETFKTQDIAVISAKLTGMQNSLMMLVDTPDYSEKCVHLEALKNRLEALASPQIVAAFTSQAVDQSKVFVKVFTEIDRMPQLLAYYYKCHKVQLLAAWQELCQSDLSLDRQLTGLYDALLGAWHTQIQWATQVFQKPHEVVMVLLIQTLGALMPSLPSCLSNGVERAGPEQELTRLLEFYDATAHFAKGLEMALLPHLHEHNLVKVTELVDAVYDPYKPYQLKYGDMEESNLLIQMSAVPLEHGEVIDCVQELSHSVNKLFGLASAAVDRCVRFTNGLGTCGLLSALKSLFAKYVSDFTSTLQSIRKKCKLDHIPPNSLFQEDWTAFQNSIRIIATCGELLRHCGDFEQQLANRILSTAGKYLSDSCSPRSLAGFQESILTDKKNSAKNPWQEYNYLQKDNPAEYASLMEILYTLKEKGSSNHNLLAAPRAALTRLNQQAHQLAFDSVFLRIKQQLLLISKMDSWNTAGIGETLTDELPAFSLTPLEYISNIGQYIMSLPLNLEPFVTQEDSALELALHAGKLPFPPEQGDELPELDNMADNWLGSIARATMQTYCDAILQIPELSPHSAKQLATDIDYLINVMDALGLQPSRTLQHIVTLLKTRPEDYRQVSKGLPRRLATTVATMRSVNY</sequence>
<protein>
    <recommendedName>
        <fullName>Conserved oligomeric Golgi complex subunit 7</fullName>
        <shortName>COG complex subunit 7</shortName>
    </recommendedName>
    <alternativeName>
        <fullName>Component of oligomeric Golgi complex 7</fullName>
    </alternativeName>
</protein>
<accession>P83436</accession>
<accession>Q6UWU7</accession>
<reference key="1">
    <citation type="journal article" date="2004" name="Genome Res.">
        <title>The status, quality, and expansion of the NIH full-length cDNA project: the Mammalian Gene Collection (MGC).</title>
        <authorList>
            <consortium name="The MGC Project Team"/>
        </authorList>
    </citation>
    <scope>NUCLEOTIDE SEQUENCE [LARGE SCALE MRNA]</scope>
    <source>
        <tissue>Brain</tissue>
        <tissue>Mammary gland</tissue>
    </source>
</reference>
<reference key="2">
    <citation type="journal article" date="2003" name="Genome Res.">
        <title>The secreted protein discovery initiative (SPDI), a large-scale effort to identify novel human secreted and transmembrane proteins: a bioinformatics assessment.</title>
        <authorList>
            <person name="Clark H.F."/>
            <person name="Gurney A.L."/>
            <person name="Abaya E."/>
            <person name="Baker K."/>
            <person name="Baldwin D.T."/>
            <person name="Brush J."/>
            <person name="Chen J."/>
            <person name="Chow B."/>
            <person name="Chui C."/>
            <person name="Crowley C."/>
            <person name="Currell B."/>
            <person name="Deuel B."/>
            <person name="Dowd P."/>
            <person name="Eaton D."/>
            <person name="Foster J.S."/>
            <person name="Grimaldi C."/>
            <person name="Gu Q."/>
            <person name="Hass P.E."/>
            <person name="Heldens S."/>
            <person name="Huang A."/>
            <person name="Kim H.S."/>
            <person name="Klimowski L."/>
            <person name="Jin Y."/>
            <person name="Johnson S."/>
            <person name="Lee J."/>
            <person name="Lewis L."/>
            <person name="Liao D."/>
            <person name="Mark M.R."/>
            <person name="Robbie E."/>
            <person name="Sanchez C."/>
            <person name="Schoenfeld J."/>
            <person name="Seshagiri S."/>
            <person name="Simmons L."/>
            <person name="Singh J."/>
            <person name="Smith V."/>
            <person name="Stinson J."/>
            <person name="Vagts A."/>
            <person name="Vandlen R.L."/>
            <person name="Watanabe C."/>
            <person name="Wieand D."/>
            <person name="Woods K."/>
            <person name="Xie M.-H."/>
            <person name="Yansura D.G."/>
            <person name="Yi S."/>
            <person name="Yu G."/>
            <person name="Yuan J."/>
            <person name="Zhang M."/>
            <person name="Zhang Z."/>
            <person name="Goddard A.D."/>
            <person name="Wood W.I."/>
            <person name="Godowski P.J."/>
            <person name="Gray A.M."/>
        </authorList>
    </citation>
    <scope>NUCLEOTIDE SEQUENCE [LARGE SCALE MRNA] OF 257-770</scope>
</reference>
<reference key="3">
    <citation type="journal article" date="2002" name="J. Cell Biol.">
        <title>Characterization of a mammalian Golgi-localized protein complex, COG, that is required for normal Golgi morphology and function.</title>
        <authorList>
            <person name="Ungar D."/>
            <person name="Oka T."/>
            <person name="Brittle E.E."/>
            <person name="Vasile E."/>
            <person name="Lupashin V.V."/>
            <person name="Chatterton J.E."/>
            <person name="Heuser J.E."/>
            <person name="Krieger M."/>
            <person name="Waters M.G."/>
        </authorList>
    </citation>
    <scope>IDENTIFICATION</scope>
    <scope>FUNCTION</scope>
    <scope>SUBUNIT</scope>
    <scope>SUBCELLULAR LOCATION</scope>
</reference>
<reference key="4">
    <citation type="journal article" date="2004" name="Nat. Med.">
        <title>Mutation of the COG complex subunit gene COG7 causes a lethal congenital disorder.</title>
        <authorList>
            <person name="Wu X."/>
            <person name="Steet R.A."/>
            <person name="Bohorov O."/>
            <person name="Bakker J."/>
            <person name="Newell J."/>
            <person name="Krieger M."/>
            <person name="Spaapen L."/>
            <person name="Kornfeld S."/>
            <person name="Freeze H.H."/>
        </authorList>
    </citation>
    <scope>INVOLVEMENT IN CDG2E</scope>
</reference>
<reference key="5">
    <citation type="journal article" date="2008" name="Mol. Cell">
        <title>Kinase-selective enrichment enables quantitative phosphoproteomics of the kinome across the cell cycle.</title>
        <authorList>
            <person name="Daub H."/>
            <person name="Olsen J.V."/>
            <person name="Bairlein M."/>
            <person name="Gnad F."/>
            <person name="Oppermann F.S."/>
            <person name="Korner R."/>
            <person name="Greff Z."/>
            <person name="Keri G."/>
            <person name="Stemmann O."/>
            <person name="Mann M."/>
        </authorList>
    </citation>
    <scope>IDENTIFICATION BY MASS SPECTROMETRY [LARGE SCALE ANALYSIS]</scope>
    <source>
        <tissue>Cervix carcinoma</tissue>
    </source>
</reference>
<reference key="6">
    <citation type="journal article" date="2008" name="Proc. Natl. Acad. Sci. U.S.A.">
        <title>A quantitative atlas of mitotic phosphorylation.</title>
        <authorList>
            <person name="Dephoure N."/>
            <person name="Zhou C."/>
            <person name="Villen J."/>
            <person name="Beausoleil S.A."/>
            <person name="Bakalarski C.E."/>
            <person name="Elledge S.J."/>
            <person name="Gygi S.P."/>
        </authorList>
    </citation>
    <scope>IDENTIFICATION BY MASS SPECTROMETRY [LARGE SCALE ANALYSIS]</scope>
    <source>
        <tissue>Cervix carcinoma</tissue>
    </source>
</reference>
<reference key="7">
    <citation type="journal article" date="2011" name="BMC Syst. Biol.">
        <title>Initial characterization of the human central proteome.</title>
        <authorList>
            <person name="Burkard T.R."/>
            <person name="Planyavsky M."/>
            <person name="Kaupe I."/>
            <person name="Breitwieser F.P."/>
            <person name="Buerckstuemmer T."/>
            <person name="Bennett K.L."/>
            <person name="Superti-Furga G."/>
            <person name="Colinge J."/>
        </authorList>
    </citation>
    <scope>IDENTIFICATION BY MASS SPECTROMETRY [LARGE SCALE ANALYSIS]</scope>
</reference>
<keyword id="KW-0900">Congenital disorder of glycosylation</keyword>
<keyword id="KW-0333">Golgi apparatus</keyword>
<keyword id="KW-0472">Membrane</keyword>
<keyword id="KW-0653">Protein transport</keyword>
<keyword id="KW-1267">Proteomics identification</keyword>
<keyword id="KW-1185">Reference proteome</keyword>
<keyword id="KW-0813">Transport</keyword>
<feature type="chain" id="PRO_0000213518" description="Conserved oligomeric Golgi complex subunit 7">
    <location>
        <begin position="1"/>
        <end position="770"/>
    </location>
</feature>
<feature type="sequence variant" id="VAR_048762" description="In dbSNP:rs16940094.">
    <original>T</original>
    <variation>M</variation>
    <location>
        <position position="605"/>
    </location>
</feature>
<comment type="function">
    <text evidence="1">Required for normal Golgi function.</text>
</comment>
<comment type="subunit">
    <text evidence="1">Component of the conserved oligomeric Golgi complex which is composed of eight different subunits and is required for normal Golgi morphology and localization.</text>
</comment>
<comment type="interaction">
    <interactant intactId="EBI-389534">
        <id>P83436</id>
    </interactant>
    <interactant intactId="EBI-368382">
        <id>Q9H9E3</id>
        <label>COG4</label>
    </interactant>
    <organismsDiffer>false</organismsDiffer>
    <experiments>6</experiments>
</comment>
<comment type="interaction">
    <interactant intactId="EBI-389534">
        <id>P83436</id>
    </interactant>
    <interactant intactId="EBI-389502">
        <id>Q9UP83</id>
        <label>COG5</label>
    </interactant>
    <organismsDiffer>false</organismsDiffer>
    <experiments>4</experiments>
</comment>
<comment type="interaction">
    <interactant intactId="EBI-389534">
        <id>P83436</id>
    </interactant>
    <interactant intactId="EBI-14069005">
        <id>Q9BVG8-5</id>
        <label>KIFC3</label>
    </interactant>
    <organismsDiffer>false</organismsDiffer>
    <experiments>6</experiments>
</comment>
<comment type="interaction">
    <interactant intactId="EBI-389534">
        <id>P83436</id>
    </interactant>
    <interactant intactId="EBI-16439278">
        <id>Q6FHY5</id>
        <label>MEOX2</label>
    </interactant>
    <organismsDiffer>false</organismsDiffer>
    <experiments>3</experiments>
</comment>
<comment type="interaction">
    <interactant intactId="EBI-389534">
        <id>P83436</id>
    </interactant>
    <interactant intactId="EBI-529518">
        <id>Q86VP1</id>
        <label>TAX1BP1</label>
    </interactant>
    <organismsDiffer>false</organismsDiffer>
    <experiments>10</experiments>
</comment>
<comment type="interaction">
    <interactant intactId="EBI-389534">
        <id>P83436</id>
    </interactant>
    <interactant intactId="EBI-523899">
        <id>P70191</id>
        <label>Traf5</label>
    </interactant>
    <organismsDiffer>true</organismsDiffer>
    <experiments>2</experiments>
</comment>
<comment type="subcellular location">
    <subcellularLocation>
        <location evidence="1">Golgi apparatus membrane</location>
        <topology evidence="1">Peripheral membrane protein</topology>
    </subcellularLocation>
</comment>
<comment type="disease" evidence="2">
    <disease id="DI-00350">
        <name>Congenital disorder of glycosylation 2E</name>
        <acronym>CDG2E</acronym>
        <description>A multisystem disorder caused by a defect in glycoprotein biosynthesis and characterized by under-glycosylated serum glycoproteins. Congenital disorders of glycosylation result in a wide variety of clinical features, such as defects in the nervous system development, psychomotor retardation, dysmorphic features, hypotonia, coagulation disorders, and immunodeficiency. The broad spectrum of features reflects the critical role of N-glycoproteins during embryonic development, differentiation, and maintenance of cell functions.</description>
        <dbReference type="MIM" id="608779"/>
    </disease>
    <text>The disease is caused by variants affecting the gene represented in this entry.</text>
</comment>
<comment type="similarity">
    <text evidence="3">Belongs to the COG7 family.</text>
</comment>
<comment type="sequence caution" evidence="3">
    <conflict type="erroneous initiation">
        <sequence resource="EMBL-CDS" id="AAQ88995"/>
    </conflict>
</comment>
<gene>
    <name type="primary">COG7</name>
    <name type="ORF">UNQ3082/PRO10013</name>
</gene>